<protein>
    <recommendedName>
        <fullName evidence="1">dITP/XTP pyrophosphatase</fullName>
        <ecNumber evidence="1">3.6.1.66</ecNumber>
    </recommendedName>
    <alternativeName>
        <fullName evidence="1">Non-canonical purine NTP pyrophosphatase</fullName>
    </alternativeName>
    <alternativeName>
        <fullName evidence="1">Non-standard purine NTP pyrophosphatase</fullName>
    </alternativeName>
    <alternativeName>
        <fullName evidence="1">Nucleoside-triphosphate diphosphatase</fullName>
    </alternativeName>
    <alternativeName>
        <fullName evidence="1">Nucleoside-triphosphate pyrophosphatase</fullName>
        <shortName evidence="1">NTPase</shortName>
    </alternativeName>
</protein>
<comment type="function">
    <text evidence="1">Pyrophosphatase that catalyzes the hydrolysis of nucleoside triphosphates to their monophosphate derivatives, with a high preference for the non-canonical purine nucleotides XTP (xanthosine triphosphate), dITP (deoxyinosine triphosphate) and ITP. Seems to function as a house-cleaning enzyme that removes non-canonical purine nucleotides from the nucleotide pool, thus preventing their incorporation into DNA/RNA and avoiding chromosomal lesions.</text>
</comment>
<comment type="catalytic activity">
    <reaction evidence="1">
        <text>XTP + H2O = XMP + diphosphate + H(+)</text>
        <dbReference type="Rhea" id="RHEA:28610"/>
        <dbReference type="ChEBI" id="CHEBI:15377"/>
        <dbReference type="ChEBI" id="CHEBI:15378"/>
        <dbReference type="ChEBI" id="CHEBI:33019"/>
        <dbReference type="ChEBI" id="CHEBI:57464"/>
        <dbReference type="ChEBI" id="CHEBI:61314"/>
        <dbReference type="EC" id="3.6.1.66"/>
    </reaction>
</comment>
<comment type="catalytic activity">
    <reaction evidence="1">
        <text>dITP + H2O = dIMP + diphosphate + H(+)</text>
        <dbReference type="Rhea" id="RHEA:28342"/>
        <dbReference type="ChEBI" id="CHEBI:15377"/>
        <dbReference type="ChEBI" id="CHEBI:15378"/>
        <dbReference type="ChEBI" id="CHEBI:33019"/>
        <dbReference type="ChEBI" id="CHEBI:61194"/>
        <dbReference type="ChEBI" id="CHEBI:61382"/>
        <dbReference type="EC" id="3.6.1.66"/>
    </reaction>
</comment>
<comment type="catalytic activity">
    <reaction evidence="1">
        <text>ITP + H2O = IMP + diphosphate + H(+)</text>
        <dbReference type="Rhea" id="RHEA:29399"/>
        <dbReference type="ChEBI" id="CHEBI:15377"/>
        <dbReference type="ChEBI" id="CHEBI:15378"/>
        <dbReference type="ChEBI" id="CHEBI:33019"/>
        <dbReference type="ChEBI" id="CHEBI:58053"/>
        <dbReference type="ChEBI" id="CHEBI:61402"/>
        <dbReference type="EC" id="3.6.1.66"/>
    </reaction>
</comment>
<comment type="cofactor">
    <cofactor evidence="1">
        <name>Mg(2+)</name>
        <dbReference type="ChEBI" id="CHEBI:18420"/>
    </cofactor>
    <text evidence="1">Binds 1 Mg(2+) ion per subunit.</text>
</comment>
<comment type="subunit">
    <text evidence="1">Homodimer.</text>
</comment>
<comment type="similarity">
    <text evidence="1">Belongs to the HAM1 NTPase family.</text>
</comment>
<sequence>MPILAQAVLASHNAGKVKEFQGWLQPWIGELVALPAAIEIAETADSFVANACLKAATAAKVMGEWAIADDSGLAVHALQGAPGIYSARYGATDAERIERLLREMADVSDRAAEFICVIALARPDGTIAVTTEGRCAGEILTAPRGQGGFGYDPVFWVPSQQRTFAEMSPVEKQQVSHRGQALQRLREYFQTLNP</sequence>
<reference key="1">
    <citation type="journal article" date="2002" name="DNA Res.">
        <title>Complete genome structure of the thermophilic cyanobacterium Thermosynechococcus elongatus BP-1.</title>
        <authorList>
            <person name="Nakamura Y."/>
            <person name="Kaneko T."/>
            <person name="Sato S."/>
            <person name="Ikeuchi M."/>
            <person name="Katoh H."/>
            <person name="Sasamoto S."/>
            <person name="Watanabe A."/>
            <person name="Iriguchi M."/>
            <person name="Kawashima K."/>
            <person name="Kimura T."/>
            <person name="Kishida Y."/>
            <person name="Kiyokawa C."/>
            <person name="Kohara M."/>
            <person name="Matsumoto M."/>
            <person name="Matsuno A."/>
            <person name="Nakazaki N."/>
            <person name="Shimpo S."/>
            <person name="Sugimoto M."/>
            <person name="Takeuchi C."/>
            <person name="Yamada M."/>
            <person name="Tabata S."/>
        </authorList>
    </citation>
    <scope>NUCLEOTIDE SEQUENCE [LARGE SCALE GENOMIC DNA]</scope>
    <source>
        <strain>NIES-2133 / IAM M-273 / BP-1</strain>
    </source>
</reference>
<organism>
    <name type="scientific">Thermosynechococcus vestitus (strain NIES-2133 / IAM M-273 / BP-1)</name>
    <dbReference type="NCBI Taxonomy" id="197221"/>
    <lineage>
        <taxon>Bacteria</taxon>
        <taxon>Bacillati</taxon>
        <taxon>Cyanobacteriota</taxon>
        <taxon>Cyanophyceae</taxon>
        <taxon>Acaryochloridales</taxon>
        <taxon>Thermosynechococcaceae</taxon>
        <taxon>Thermosynechococcus</taxon>
    </lineage>
</organism>
<proteinExistence type="inferred from homology"/>
<keyword id="KW-0378">Hydrolase</keyword>
<keyword id="KW-0460">Magnesium</keyword>
<keyword id="KW-0479">Metal-binding</keyword>
<keyword id="KW-0546">Nucleotide metabolism</keyword>
<keyword id="KW-0547">Nucleotide-binding</keyword>
<keyword id="KW-1185">Reference proteome</keyword>
<evidence type="ECO:0000255" key="1">
    <source>
        <dbReference type="HAMAP-Rule" id="MF_01405"/>
    </source>
</evidence>
<dbReference type="EC" id="3.6.1.66" evidence="1"/>
<dbReference type="EMBL" id="BA000039">
    <property type="protein sequence ID" value="BAC09349.1"/>
    <property type="molecule type" value="Genomic_DNA"/>
</dbReference>
<dbReference type="RefSeq" id="NP_682587.1">
    <property type="nucleotide sequence ID" value="NC_004113.1"/>
</dbReference>
<dbReference type="RefSeq" id="WP_011057634.1">
    <property type="nucleotide sequence ID" value="NC_004113.1"/>
</dbReference>
<dbReference type="SMR" id="Q8DHZ6"/>
<dbReference type="STRING" id="197221.gene:10748402"/>
<dbReference type="EnsemblBacteria" id="BAC09349">
    <property type="protein sequence ID" value="BAC09349"/>
    <property type="gene ID" value="BAC09349"/>
</dbReference>
<dbReference type="KEGG" id="tel:tll1797"/>
<dbReference type="PATRIC" id="fig|197221.4.peg.1879"/>
<dbReference type="eggNOG" id="COG0127">
    <property type="taxonomic scope" value="Bacteria"/>
</dbReference>
<dbReference type="Proteomes" id="UP000000440">
    <property type="component" value="Chromosome"/>
</dbReference>
<dbReference type="GO" id="GO:0005829">
    <property type="term" value="C:cytosol"/>
    <property type="evidence" value="ECO:0007669"/>
    <property type="project" value="TreeGrafter"/>
</dbReference>
<dbReference type="GO" id="GO:0035870">
    <property type="term" value="F:dITP diphosphatase activity"/>
    <property type="evidence" value="ECO:0007669"/>
    <property type="project" value="RHEA"/>
</dbReference>
<dbReference type="GO" id="GO:0036220">
    <property type="term" value="F:ITP diphosphatase activity"/>
    <property type="evidence" value="ECO:0007669"/>
    <property type="project" value="UniProtKB-EC"/>
</dbReference>
<dbReference type="GO" id="GO:0046872">
    <property type="term" value="F:metal ion binding"/>
    <property type="evidence" value="ECO:0007669"/>
    <property type="project" value="UniProtKB-KW"/>
</dbReference>
<dbReference type="GO" id="GO:0000166">
    <property type="term" value="F:nucleotide binding"/>
    <property type="evidence" value="ECO:0007669"/>
    <property type="project" value="UniProtKB-KW"/>
</dbReference>
<dbReference type="GO" id="GO:0017111">
    <property type="term" value="F:ribonucleoside triphosphate phosphatase activity"/>
    <property type="evidence" value="ECO:0007669"/>
    <property type="project" value="InterPro"/>
</dbReference>
<dbReference type="GO" id="GO:0036222">
    <property type="term" value="F:XTP diphosphatase activity"/>
    <property type="evidence" value="ECO:0007669"/>
    <property type="project" value="RHEA"/>
</dbReference>
<dbReference type="GO" id="GO:0009117">
    <property type="term" value="P:nucleotide metabolic process"/>
    <property type="evidence" value="ECO:0007669"/>
    <property type="project" value="UniProtKB-KW"/>
</dbReference>
<dbReference type="GO" id="GO:0009146">
    <property type="term" value="P:purine nucleoside triphosphate catabolic process"/>
    <property type="evidence" value="ECO:0007669"/>
    <property type="project" value="UniProtKB-UniRule"/>
</dbReference>
<dbReference type="CDD" id="cd00515">
    <property type="entry name" value="HAM1"/>
    <property type="match status" value="1"/>
</dbReference>
<dbReference type="FunFam" id="3.90.950.10:FF:000001">
    <property type="entry name" value="dITP/XTP pyrophosphatase"/>
    <property type="match status" value="1"/>
</dbReference>
<dbReference type="Gene3D" id="3.90.950.10">
    <property type="match status" value="1"/>
</dbReference>
<dbReference type="HAMAP" id="MF_01405">
    <property type="entry name" value="Non_canon_purine_NTPase"/>
    <property type="match status" value="1"/>
</dbReference>
<dbReference type="InterPro" id="IPR020922">
    <property type="entry name" value="dITP/XTP_pyrophosphatase"/>
</dbReference>
<dbReference type="InterPro" id="IPR029001">
    <property type="entry name" value="ITPase-like_fam"/>
</dbReference>
<dbReference type="InterPro" id="IPR002637">
    <property type="entry name" value="RdgB/HAM1"/>
</dbReference>
<dbReference type="NCBIfam" id="TIGR00042">
    <property type="entry name" value="RdgB/HAM1 family non-canonical purine NTP pyrophosphatase"/>
    <property type="match status" value="1"/>
</dbReference>
<dbReference type="PANTHER" id="PTHR11067:SF9">
    <property type="entry name" value="INOSINE TRIPHOSPHATE PYROPHOSPHATASE"/>
    <property type="match status" value="1"/>
</dbReference>
<dbReference type="PANTHER" id="PTHR11067">
    <property type="entry name" value="INOSINE TRIPHOSPHATE PYROPHOSPHATASE/HAM1 PROTEIN"/>
    <property type="match status" value="1"/>
</dbReference>
<dbReference type="Pfam" id="PF01725">
    <property type="entry name" value="Ham1p_like"/>
    <property type="match status" value="1"/>
</dbReference>
<dbReference type="SUPFAM" id="SSF52972">
    <property type="entry name" value="ITPase-like"/>
    <property type="match status" value="1"/>
</dbReference>
<gene>
    <name type="ordered locus">tll1797</name>
</gene>
<feature type="chain" id="PRO_0000178249" description="dITP/XTP pyrophosphatase">
    <location>
        <begin position="1"/>
        <end position="194"/>
    </location>
</feature>
<feature type="active site" description="Proton acceptor" evidence="1">
    <location>
        <position position="70"/>
    </location>
</feature>
<feature type="binding site" evidence="1">
    <location>
        <begin position="11"/>
        <end position="16"/>
    </location>
    <ligand>
        <name>substrate</name>
    </ligand>
</feature>
<feature type="binding site" evidence="1">
    <location>
        <position position="70"/>
    </location>
    <ligand>
        <name>Mg(2+)</name>
        <dbReference type="ChEBI" id="CHEBI:18420"/>
    </ligand>
</feature>
<feature type="binding site" evidence="1">
    <location>
        <position position="71"/>
    </location>
    <ligand>
        <name>substrate</name>
    </ligand>
</feature>
<feature type="binding site" evidence="1">
    <location>
        <begin position="149"/>
        <end position="152"/>
    </location>
    <ligand>
        <name>substrate</name>
    </ligand>
</feature>
<feature type="binding site" evidence="1">
    <location>
        <position position="172"/>
    </location>
    <ligand>
        <name>substrate</name>
    </ligand>
</feature>
<feature type="binding site" evidence="1">
    <location>
        <begin position="177"/>
        <end position="178"/>
    </location>
    <ligand>
        <name>substrate</name>
    </ligand>
</feature>
<name>IXTPA_THEVB</name>
<accession>Q8DHZ6</accession>